<sequence>MKKILGFLFIVCSLGLSATVHGETTNSQQLLSNNINTELINHNSNAILSSTEGSTTDSINLGAQSPAVKSTTRTELDVTGAAKTLLQTSAVQKEMKVSLQETQVSSEFSKRDSVTNKEAVPVSKDELLEQSEVVVSTSSIQKNKILDNKKKRANFVTSSPLIKEKPSNSKDASGVIDNSASPLSYRKAKEVVSLRQPLKNQKVEAQPLLISNSSEKKASVYTNSHDFWDYQWDMKYVTNNGESYALYQPSKKISVGIIDSGIMEEHPDLSNSLGNYFKNLVPKGGFDNEEPDETGNPSDIVDKMGHGTEVAGQITANGNILGVAPGITVNIYRVFGENLSKSEWVARAIRRAADDGNKVINISAGQYLMISGSYDDGTNDYQEYLNYKSAINYATAKGSIVVAALGNDSLNIQDNQTMINFLKRFRSIKVPGKVVDAPSVFEDVIAVGGIDGYGNISDFSNIGADAIYAPAGTTANFKKYGQDKFVSQGYYLKDWLFTTANTGWYQYVYGNSFATPKVSGALALVVDKYGIKNPNQLKRFLLMNSPEVNGNRVLNIVDLLNGKNKAFSLDTDKGQDDAINHKSMENLKESRDTMKQEQDKEIQRNTNNNFSIKNDFHNISKEVISVDYNINQKMANNRNSRGAVSVRSQEILPVTGDGEDFLPALGIVCISILGILKRKTKN</sequence>
<reference key="1">
    <citation type="journal article" date="1993" name="J. Bacteriol.">
        <title>Characterization of the Lactococcus lactis nisin A operon genes nisP, encoding a subtilisin-like serine protease involved in precursor processing, and nisR, encoding a regulatory protein involved in nisin biosynthesis.</title>
        <authorList>
            <person name="van der Meer J.R."/>
            <person name="Polman J."/>
            <person name="Beerthuyzen M.M."/>
            <person name="Siezen R.J."/>
            <person name="Kuipers O.P."/>
            <person name="de Vos W.M."/>
        </authorList>
    </citation>
    <scope>NUCLEOTIDE SEQUENCE [GENOMIC DNA]</scope>
    <source>
        <strain>NIZO R5</strain>
    </source>
</reference>
<reference key="2">
    <citation type="journal article" date="1994" name="Appl. Environ. Microbiol.">
        <title>Regulation of nisin biosynthesis and immunity in Lactococcus lactis 6F3.</title>
        <authorList>
            <person name="Engelke G."/>
            <person name="Gutowski-Eckel Z."/>
            <person name="Kiesau P."/>
            <person name="Siegers K."/>
            <person name="Hammelmann M."/>
            <person name="Entian K.-D."/>
        </authorList>
    </citation>
    <scope>NUCLEOTIDE SEQUENCE [GENOMIC DNA]</scope>
    <source>
        <strain>6F3</strain>
    </source>
</reference>
<reference key="3">
    <citation type="journal article" date="1995" name="Protein Eng.">
        <title>Homology modelling of the Lactococcus lactis leader peptidase NisP and its interaction with the precursor of the lantibiotic nisin.</title>
        <authorList>
            <person name="Siezen R.J."/>
            <person name="Rollema H.S."/>
            <person name="Kuipers O.P."/>
            <person name="de Vos W.M."/>
        </authorList>
    </citation>
    <scope>3D-STRUCTURE MODELING</scope>
</reference>
<name>NISP_LACLL</name>
<accession>Q07596</accession>
<evidence type="ECO:0000255" key="1"/>
<evidence type="ECO:0000255" key="2">
    <source>
        <dbReference type="PROSITE-ProRule" id="PRU00477"/>
    </source>
</evidence>
<evidence type="ECO:0000255" key="3">
    <source>
        <dbReference type="PROSITE-ProRule" id="PRU01240"/>
    </source>
</evidence>
<evidence type="ECO:0000305" key="4"/>
<evidence type="ECO:0007829" key="5">
    <source>
        <dbReference type="PDB" id="4MZD"/>
    </source>
</evidence>
<organism>
    <name type="scientific">Lactococcus lactis subsp. lactis</name>
    <name type="common">Streptococcus lactis</name>
    <dbReference type="NCBI Taxonomy" id="1360"/>
    <lineage>
        <taxon>Bacteria</taxon>
        <taxon>Bacillati</taxon>
        <taxon>Bacillota</taxon>
        <taxon>Bacilli</taxon>
        <taxon>Lactobacillales</taxon>
        <taxon>Streptococcaceae</taxon>
        <taxon>Lactococcus</taxon>
    </lineage>
</organism>
<comment type="function">
    <text>Cleaves the lantibiotic nisin precursor peptide.</text>
</comment>
<comment type="pathway">
    <text>Antibiotic biosynthesis; nisin biosynthesis.</text>
</comment>
<comment type="subcellular location">
    <subcellularLocation>
        <location evidence="4">Secreted</location>
        <location evidence="4">Cell wall</location>
        <topology evidence="4">Peptidoglycan-anchor</topology>
    </subcellularLocation>
</comment>
<comment type="similarity">
    <text evidence="4">Belongs to the peptidase S8 family.</text>
</comment>
<protein>
    <recommendedName>
        <fullName>Nisin leader peptide-processing serine protease NisP</fullName>
        <ecNumber>3.4.21.-</ecNumber>
    </recommendedName>
</protein>
<proteinExistence type="evidence at protein level"/>
<dbReference type="EC" id="3.4.21.-"/>
<dbReference type="EMBL" id="L11061">
    <property type="protein sequence ID" value="AAA25200.1"/>
    <property type="molecule type" value="Genomic_DNA"/>
</dbReference>
<dbReference type="EMBL" id="X76884">
    <property type="protein sequence ID" value="CAA54210.1"/>
    <property type="molecule type" value="Genomic_DNA"/>
</dbReference>
<dbReference type="PIR" id="S44131">
    <property type="entry name" value="S44131"/>
</dbReference>
<dbReference type="RefSeq" id="WP_014570410.1">
    <property type="nucleotide sequence ID" value="NZ_ML956318.1"/>
</dbReference>
<dbReference type="PDB" id="4MZD">
    <property type="method" value="X-ray"/>
    <property type="resolution" value="1.10 A"/>
    <property type="chains" value="A=196-647"/>
</dbReference>
<dbReference type="PDBsum" id="4MZD"/>
<dbReference type="SMR" id="Q07596"/>
<dbReference type="MEROPS" id="S08.059"/>
<dbReference type="BRENDA" id="3.4.22.46">
    <property type="organism ID" value="2864"/>
</dbReference>
<dbReference type="UniPathway" id="UPA00853"/>
<dbReference type="EvolutionaryTrace" id="Q07596"/>
<dbReference type="GO" id="GO:0005576">
    <property type="term" value="C:extracellular region"/>
    <property type="evidence" value="ECO:0007669"/>
    <property type="project" value="UniProtKB-KW"/>
</dbReference>
<dbReference type="GO" id="GO:0004252">
    <property type="term" value="F:serine-type endopeptidase activity"/>
    <property type="evidence" value="ECO:0007669"/>
    <property type="project" value="InterPro"/>
</dbReference>
<dbReference type="GO" id="GO:0006508">
    <property type="term" value="P:proteolysis"/>
    <property type="evidence" value="ECO:0007669"/>
    <property type="project" value="UniProtKB-KW"/>
</dbReference>
<dbReference type="CDD" id="cd07482">
    <property type="entry name" value="Peptidases_S8_Lantibiotic_specific_protease"/>
    <property type="match status" value="1"/>
</dbReference>
<dbReference type="Gene3D" id="3.40.50.200">
    <property type="entry name" value="Peptidase S8/S53 domain"/>
    <property type="match status" value="1"/>
</dbReference>
<dbReference type="InterPro" id="IPR008357">
    <property type="entry name" value="Lanit_process"/>
</dbReference>
<dbReference type="InterPro" id="IPR019931">
    <property type="entry name" value="LPXTG_anchor"/>
</dbReference>
<dbReference type="InterPro" id="IPR000209">
    <property type="entry name" value="Peptidase_S8/S53_dom"/>
</dbReference>
<dbReference type="InterPro" id="IPR036852">
    <property type="entry name" value="Peptidase_S8/S53_dom_sf"/>
</dbReference>
<dbReference type="InterPro" id="IPR023827">
    <property type="entry name" value="Peptidase_S8_Asp-AS"/>
</dbReference>
<dbReference type="InterPro" id="IPR022398">
    <property type="entry name" value="Peptidase_S8_His-AS"/>
</dbReference>
<dbReference type="InterPro" id="IPR050131">
    <property type="entry name" value="Peptidase_S8_subtilisin-like"/>
</dbReference>
<dbReference type="InterPro" id="IPR015500">
    <property type="entry name" value="Peptidase_S8_subtilisin-rel"/>
</dbReference>
<dbReference type="PANTHER" id="PTHR43806:SF11">
    <property type="entry name" value="CEREVISIN-RELATED"/>
    <property type="match status" value="1"/>
</dbReference>
<dbReference type="PANTHER" id="PTHR43806">
    <property type="entry name" value="PEPTIDASE S8"/>
    <property type="match status" value="1"/>
</dbReference>
<dbReference type="Pfam" id="PF00082">
    <property type="entry name" value="Peptidase_S8"/>
    <property type="match status" value="1"/>
</dbReference>
<dbReference type="PIRSF" id="PIRSF037875">
    <property type="entry name" value="Peptidase_S8_lp"/>
    <property type="match status" value="1"/>
</dbReference>
<dbReference type="PRINTS" id="PR01779">
    <property type="entry name" value="LANTIPROCESS"/>
</dbReference>
<dbReference type="PRINTS" id="PR00723">
    <property type="entry name" value="SUBTILISIN"/>
</dbReference>
<dbReference type="SUPFAM" id="SSF52743">
    <property type="entry name" value="Subtilisin-like"/>
    <property type="match status" value="1"/>
</dbReference>
<dbReference type="PROSITE" id="PS50847">
    <property type="entry name" value="GRAM_POS_ANCHORING"/>
    <property type="match status" value="1"/>
</dbReference>
<dbReference type="PROSITE" id="PS51892">
    <property type="entry name" value="SUBTILASE"/>
    <property type="match status" value="1"/>
</dbReference>
<dbReference type="PROSITE" id="PS00136">
    <property type="entry name" value="SUBTILASE_ASP"/>
    <property type="match status" value="1"/>
</dbReference>
<dbReference type="PROSITE" id="PS00137">
    <property type="entry name" value="SUBTILASE_HIS"/>
    <property type="match status" value="1"/>
</dbReference>
<feature type="signal peptide" evidence="1">
    <location>
        <begin position="1"/>
        <end position="22"/>
    </location>
</feature>
<feature type="propeptide" id="PRO_0000027077" evidence="1">
    <location>
        <begin position="23"/>
        <end position="195"/>
    </location>
</feature>
<feature type="chain" id="PRO_0000027078" description="Nisin leader peptide-processing serine protease NisP">
    <location>
        <begin position="196"/>
        <end position="655"/>
    </location>
</feature>
<feature type="propeptide" id="PRO_0000027079" description="Removed by sortase" evidence="2">
    <location>
        <begin position="656"/>
        <end position="682"/>
    </location>
</feature>
<feature type="domain" description="Peptidase S8" evidence="3">
    <location>
        <begin position="231"/>
        <end position="566"/>
    </location>
</feature>
<feature type="short sequence motif" description="LPXTG sorting signal" evidence="2">
    <location>
        <begin position="652"/>
        <end position="656"/>
    </location>
</feature>
<feature type="active site" description="Charge relay system" evidence="3">
    <location>
        <position position="259"/>
    </location>
</feature>
<feature type="active site" description="Charge relay system" evidence="3">
    <location>
        <position position="306"/>
    </location>
</feature>
<feature type="active site" description="Charge relay system" evidence="3">
    <location>
        <position position="512"/>
    </location>
</feature>
<feature type="modified residue" description="Pentaglycyl murein peptidoglycan amidated threonine" evidence="2">
    <location>
        <position position="655"/>
    </location>
</feature>
<feature type="sequence conflict" description="In Ref. 2; CAA54210." evidence="4" ref="2">
    <original>A</original>
    <variation>T</variation>
    <location>
        <position position="500"/>
    </location>
</feature>
<feature type="helix" evidence="5">
    <location>
        <begin position="228"/>
        <end position="230"/>
    </location>
</feature>
<feature type="helix" evidence="5">
    <location>
        <begin position="232"/>
        <end position="238"/>
    </location>
</feature>
<feature type="turn" evidence="5">
    <location>
        <begin position="239"/>
        <end position="241"/>
    </location>
</feature>
<feature type="helix" evidence="5">
    <location>
        <begin position="242"/>
        <end position="246"/>
    </location>
</feature>
<feature type="strand" evidence="5">
    <location>
        <begin position="254"/>
        <end position="260"/>
    </location>
</feature>
<feature type="turn" evidence="5">
    <location>
        <begin position="267"/>
        <end position="269"/>
    </location>
</feature>
<feature type="helix" evidence="5">
    <location>
        <begin position="270"/>
        <end position="272"/>
    </location>
</feature>
<feature type="strand" evidence="5">
    <location>
        <begin position="273"/>
        <end position="279"/>
    </location>
</feature>
<feature type="helix" evidence="5">
    <location>
        <begin position="286"/>
        <end position="288"/>
    </location>
</feature>
<feature type="strand" evidence="5">
    <location>
        <begin position="303"/>
        <end position="305"/>
    </location>
</feature>
<feature type="helix" evidence="5">
    <location>
        <begin position="306"/>
        <end position="315"/>
    </location>
</feature>
<feature type="strand" evidence="5">
    <location>
        <begin position="317"/>
        <end position="321"/>
    </location>
</feature>
<feature type="strand" evidence="5">
    <location>
        <begin position="328"/>
        <end position="333"/>
    </location>
</feature>
<feature type="strand" evidence="5">
    <location>
        <begin position="336"/>
        <end position="338"/>
    </location>
</feature>
<feature type="helix" evidence="5">
    <location>
        <begin position="342"/>
        <end position="354"/>
    </location>
</feature>
<feature type="strand" evidence="5">
    <location>
        <begin position="358"/>
        <end position="362"/>
    </location>
</feature>
<feature type="strand" evidence="5">
    <location>
        <begin position="364"/>
        <end position="369"/>
    </location>
</feature>
<feature type="strand" evidence="5">
    <location>
        <begin position="371"/>
        <end position="374"/>
    </location>
</feature>
<feature type="helix" evidence="5">
    <location>
        <begin position="381"/>
        <end position="397"/>
    </location>
</feature>
<feature type="strand" evidence="5">
    <location>
        <begin position="400"/>
        <end position="404"/>
    </location>
</feature>
<feature type="helix" evidence="5">
    <location>
        <begin position="415"/>
        <end position="423"/>
    </location>
</feature>
<feature type="strand" evidence="5">
    <location>
        <begin position="428"/>
        <end position="430"/>
    </location>
</feature>
<feature type="strand" evidence="5">
    <location>
        <begin position="434"/>
        <end position="437"/>
    </location>
</feature>
<feature type="turn" evidence="5">
    <location>
        <begin position="438"/>
        <end position="440"/>
    </location>
</feature>
<feature type="strand" evidence="5">
    <location>
        <begin position="444"/>
        <end position="450"/>
    </location>
</feature>
<feature type="strand" evidence="5">
    <location>
        <begin position="454"/>
        <end position="456"/>
    </location>
</feature>
<feature type="strand" evidence="5">
    <location>
        <begin position="467"/>
        <end position="470"/>
    </location>
</feature>
<feature type="helix" evidence="5">
    <location>
        <begin position="475"/>
        <end position="487"/>
    </location>
</feature>
<feature type="turn" evidence="5">
    <location>
        <begin position="488"/>
        <end position="490"/>
    </location>
</feature>
<feature type="helix" evidence="5">
    <location>
        <begin position="491"/>
        <end position="494"/>
    </location>
</feature>
<feature type="strand" evidence="5">
    <location>
        <begin position="495"/>
        <end position="499"/>
    </location>
</feature>
<feature type="strand" evidence="5">
    <location>
        <begin position="503"/>
        <end position="508"/>
    </location>
</feature>
<feature type="helix" evidence="5">
    <location>
        <begin position="511"/>
        <end position="513"/>
    </location>
</feature>
<feature type="helix" evidence="5">
    <location>
        <begin position="515"/>
        <end position="529"/>
    </location>
</feature>
<feature type="helix" evidence="5">
    <location>
        <begin position="534"/>
        <end position="542"/>
    </location>
</feature>
<feature type="strand" evidence="5">
    <location>
        <begin position="551"/>
        <end position="553"/>
    </location>
</feature>
<feature type="helix" evidence="5">
    <location>
        <begin position="556"/>
        <end position="561"/>
    </location>
</feature>
<feature type="strand" evidence="5">
    <location>
        <begin position="644"/>
        <end position="646"/>
    </location>
</feature>
<gene>
    <name type="primary">nisP</name>
</gene>
<keyword id="KW-0002">3D-structure</keyword>
<keyword id="KW-0134">Cell wall</keyword>
<keyword id="KW-0378">Hydrolase</keyword>
<keyword id="KW-0572">Peptidoglycan-anchor</keyword>
<keyword id="KW-0645">Protease</keyword>
<keyword id="KW-0964">Secreted</keyword>
<keyword id="KW-0720">Serine protease</keyword>
<keyword id="KW-0732">Signal</keyword>
<keyword id="KW-0865">Zymogen</keyword>